<dbReference type="EC" id="1.10.3.9" evidence="1"/>
<dbReference type="EMBL" id="CP000815">
    <property type="protein sequence ID" value="ACB42493.1"/>
    <property type="molecule type" value="Genomic_DNA"/>
</dbReference>
<dbReference type="EMBL" id="CP000815">
    <property type="protein sequence ID" value="ACB42741.1"/>
    <property type="molecule type" value="Genomic_DNA"/>
</dbReference>
<dbReference type="RefSeq" id="YP_002048703.1">
    <property type="nucleotide sequence ID" value="NC_011087.1"/>
</dbReference>
<dbReference type="SMR" id="B1X3H4"/>
<dbReference type="GeneID" id="6481734"/>
<dbReference type="GO" id="GO:0009535">
    <property type="term" value="C:chloroplast thylakoid membrane"/>
    <property type="evidence" value="ECO:0007669"/>
    <property type="project" value="TreeGrafter"/>
</dbReference>
<dbReference type="GO" id="GO:0070118">
    <property type="term" value="C:organellar chromatophore thylakoid membrane"/>
    <property type="evidence" value="ECO:0007669"/>
    <property type="project" value="UniProtKB-SubCell"/>
</dbReference>
<dbReference type="GO" id="GO:0009523">
    <property type="term" value="C:photosystem II"/>
    <property type="evidence" value="ECO:0007669"/>
    <property type="project" value="UniProtKB-KW"/>
</dbReference>
<dbReference type="GO" id="GO:0016168">
    <property type="term" value="F:chlorophyll binding"/>
    <property type="evidence" value="ECO:0007669"/>
    <property type="project" value="UniProtKB-UniRule"/>
</dbReference>
<dbReference type="GO" id="GO:0045156">
    <property type="term" value="F:electron transporter, transferring electrons within the cyclic electron transport pathway of photosynthesis activity"/>
    <property type="evidence" value="ECO:0007669"/>
    <property type="project" value="InterPro"/>
</dbReference>
<dbReference type="GO" id="GO:0005506">
    <property type="term" value="F:iron ion binding"/>
    <property type="evidence" value="ECO:0007669"/>
    <property type="project" value="UniProtKB-UniRule"/>
</dbReference>
<dbReference type="GO" id="GO:0016491">
    <property type="term" value="F:oxidoreductase activity"/>
    <property type="evidence" value="ECO:0007669"/>
    <property type="project" value="UniProtKB-KW"/>
</dbReference>
<dbReference type="GO" id="GO:0009772">
    <property type="term" value="P:photosynthetic electron transport in photosystem II"/>
    <property type="evidence" value="ECO:0007669"/>
    <property type="project" value="InterPro"/>
</dbReference>
<dbReference type="FunFam" id="1.20.85.10:FF:000001">
    <property type="entry name" value="photosystem II D2 protein-like"/>
    <property type="match status" value="1"/>
</dbReference>
<dbReference type="Gene3D" id="1.20.85.10">
    <property type="entry name" value="Photosystem II protein D1-like"/>
    <property type="match status" value="1"/>
</dbReference>
<dbReference type="HAMAP" id="MF_01383">
    <property type="entry name" value="PSII_PsbD_D2"/>
    <property type="match status" value="1"/>
</dbReference>
<dbReference type="InterPro" id="IPR055266">
    <property type="entry name" value="D1/D2"/>
</dbReference>
<dbReference type="InterPro" id="IPR036854">
    <property type="entry name" value="Photo_II_D1/D2_sf"/>
</dbReference>
<dbReference type="InterPro" id="IPR000484">
    <property type="entry name" value="Photo_RC_L/M"/>
</dbReference>
<dbReference type="InterPro" id="IPR055265">
    <property type="entry name" value="Photo_RC_L/M_CS"/>
</dbReference>
<dbReference type="InterPro" id="IPR005868">
    <property type="entry name" value="PSII_PsbD/D2"/>
</dbReference>
<dbReference type="NCBIfam" id="TIGR01152">
    <property type="entry name" value="psbD"/>
    <property type="match status" value="1"/>
</dbReference>
<dbReference type="PANTHER" id="PTHR33149:SF12">
    <property type="entry name" value="PHOTOSYSTEM II D2 PROTEIN"/>
    <property type="match status" value="1"/>
</dbReference>
<dbReference type="PANTHER" id="PTHR33149">
    <property type="entry name" value="PHOTOSYSTEM II PROTEIN D1"/>
    <property type="match status" value="1"/>
</dbReference>
<dbReference type="Pfam" id="PF00124">
    <property type="entry name" value="Photo_RC"/>
    <property type="match status" value="1"/>
</dbReference>
<dbReference type="PRINTS" id="PR00256">
    <property type="entry name" value="REACTNCENTRE"/>
</dbReference>
<dbReference type="SUPFAM" id="SSF81483">
    <property type="entry name" value="Bacterial photosystem II reaction centre, L and M subunits"/>
    <property type="match status" value="1"/>
</dbReference>
<dbReference type="PROSITE" id="PS00244">
    <property type="entry name" value="REACTION_CENTER"/>
    <property type="match status" value="1"/>
</dbReference>
<accession>B1X3H4</accession>
<name>PSBD_PAUCH</name>
<comment type="function">
    <text evidence="1">Photosystem II (PSII) is a light-driven water:plastoquinone oxidoreductase that uses light energy to abstract electrons from H(2)O, generating O(2) and a proton gradient subsequently used for ATP formation. It consists of a core antenna complex that captures photons, and an electron transfer chain that converts photonic excitation into a charge separation. The D1/D2 (PsbA/PsbD) reaction center heterodimer binds P680, the primary electron donor of PSII as well as several subsequent electron acceptors. D2 is needed for assembly of a stable PSII complex.</text>
</comment>
<comment type="catalytic activity">
    <reaction evidence="1">
        <text>2 a plastoquinone + 4 hnu + 2 H2O = 2 a plastoquinol + O2</text>
        <dbReference type="Rhea" id="RHEA:36359"/>
        <dbReference type="Rhea" id="RHEA-COMP:9561"/>
        <dbReference type="Rhea" id="RHEA-COMP:9562"/>
        <dbReference type="ChEBI" id="CHEBI:15377"/>
        <dbReference type="ChEBI" id="CHEBI:15379"/>
        <dbReference type="ChEBI" id="CHEBI:17757"/>
        <dbReference type="ChEBI" id="CHEBI:30212"/>
        <dbReference type="ChEBI" id="CHEBI:62192"/>
        <dbReference type="EC" id="1.10.3.9"/>
    </reaction>
</comment>
<comment type="cofactor">
    <text evidence="1">The D1/D2 heterodimer binds P680, chlorophylls that are the primary electron donor of PSII, and subsequent electron acceptors. It shares a non-heme iron and each subunit binds pheophytin, quinone, additional chlorophylls, carotenoids and lipids. There is also a Cl(-1) ion associated with D1 and D2, which is required for oxygen evolution. The PSII complex binds additional chlorophylls, carotenoids and specific lipids.</text>
</comment>
<comment type="subunit">
    <text evidence="1">PSII is composed of 1 copy each of membrane proteins PsbA, PsbB, PsbC, PsbD, PsbE, PsbF, PsbH, PsbI, PsbJ, PsbK, PsbL, PsbM, PsbT, PsbX, PsbY, PsbZ, Psb30/Ycf12, at least 3 peripheral proteins of the oxygen-evolving complex and a large number of cofactors. It forms dimeric complexes.</text>
</comment>
<comment type="subcellular location">
    <subcellularLocation>
        <location evidence="1">Plastid</location>
        <location evidence="1">Organellar chromatophore thylakoid membrane</location>
        <topology evidence="1">Multi-pass membrane protein</topology>
    </subcellularLocation>
</comment>
<comment type="miscellaneous">
    <text evidence="1">2 of the reaction center chlorophylls (ChlD1 and ChlD2) are entirely coordinated by water.</text>
</comment>
<comment type="similarity">
    <text evidence="1">Belongs to the reaction center PufL/M/PsbA/D family.</text>
</comment>
<feature type="chain" id="PRO_0000359702" description="Photosystem II D2 protein">
    <location>
        <begin position="1"/>
        <end position="352"/>
    </location>
</feature>
<feature type="transmembrane region" description="Helical" evidence="1">
    <location>
        <begin position="40"/>
        <end position="60"/>
    </location>
</feature>
<feature type="transmembrane region" description="Helical" evidence="1">
    <location>
        <begin position="124"/>
        <end position="140"/>
    </location>
</feature>
<feature type="transmembrane region" description="Helical" evidence="1">
    <location>
        <begin position="152"/>
        <end position="165"/>
    </location>
</feature>
<feature type="transmembrane region" description="Helical" evidence="1">
    <location>
        <begin position="207"/>
        <end position="227"/>
    </location>
</feature>
<feature type="transmembrane region" description="Helical" evidence="1">
    <location>
        <begin position="278"/>
        <end position="294"/>
    </location>
</feature>
<feature type="binding site" description="axial binding residue" evidence="1">
    <location>
        <position position="117"/>
    </location>
    <ligand>
        <name>chlorophyll a</name>
        <dbReference type="ChEBI" id="CHEBI:58416"/>
        <label>ChlzD2</label>
    </ligand>
    <ligandPart>
        <name>Mg</name>
        <dbReference type="ChEBI" id="CHEBI:25107"/>
    </ligandPart>
</feature>
<feature type="binding site" evidence="1">
    <location>
        <position position="129"/>
    </location>
    <ligand>
        <name>pheophytin a</name>
        <dbReference type="ChEBI" id="CHEBI:136840"/>
        <label>D2</label>
    </ligand>
</feature>
<feature type="binding site" evidence="1">
    <location>
        <position position="142"/>
    </location>
    <ligand>
        <name>pheophytin a</name>
        <dbReference type="ChEBI" id="CHEBI:136840"/>
        <label>D2</label>
    </ligand>
</feature>
<feature type="binding site" description="axial binding residue" evidence="1">
    <location>
        <position position="197"/>
    </location>
    <ligand>
        <name>chlorophyll a</name>
        <dbReference type="ChEBI" id="CHEBI:58416"/>
        <label>PD2</label>
    </ligand>
    <ligandPart>
        <name>Mg</name>
        <dbReference type="ChEBI" id="CHEBI:25107"/>
    </ligandPart>
</feature>
<feature type="binding site" evidence="1">
    <location>
        <position position="214"/>
    </location>
    <ligand>
        <name>a plastoquinone</name>
        <dbReference type="ChEBI" id="CHEBI:17757"/>
        <label>Q(A)</label>
    </ligand>
</feature>
<feature type="binding site" evidence="1">
    <location>
        <position position="214"/>
    </location>
    <ligand>
        <name>Fe cation</name>
        <dbReference type="ChEBI" id="CHEBI:24875"/>
        <note>ligand shared with heterodimeric partner</note>
    </ligand>
</feature>
<feature type="binding site" evidence="1">
    <location>
        <position position="261"/>
    </location>
    <ligand>
        <name>a plastoquinone</name>
        <dbReference type="ChEBI" id="CHEBI:17757"/>
        <label>Q(A)</label>
    </ligand>
</feature>
<feature type="binding site" evidence="1">
    <location>
        <position position="268"/>
    </location>
    <ligand>
        <name>Fe cation</name>
        <dbReference type="ChEBI" id="CHEBI:24875"/>
        <note>ligand shared with heterodimeric partner</note>
    </ligand>
</feature>
<geneLocation type="organellar chromatophore"/>
<organism>
    <name type="scientific">Paulinella chromatophora</name>
    <dbReference type="NCBI Taxonomy" id="39717"/>
    <lineage>
        <taxon>Eukaryota</taxon>
        <taxon>Sar</taxon>
        <taxon>Rhizaria</taxon>
        <taxon>Cercozoa</taxon>
        <taxon>Imbricatea</taxon>
        <taxon>Silicofilosea</taxon>
        <taxon>Euglyphida</taxon>
        <taxon>Paulinellidae</taxon>
        <taxon>Paulinella</taxon>
    </lineage>
</organism>
<gene>
    <name evidence="1" type="primary">psbD1</name>
    <name type="ordered locus">PCC_0033</name>
</gene>
<gene>
    <name evidence="1" type="primary">psbD2</name>
    <name type="ordered locus">PCC_0299</name>
</gene>
<protein>
    <recommendedName>
        <fullName evidence="1">Photosystem II D2 protein</fullName>
        <shortName evidence="1">PSII D2 protein</shortName>
        <ecNumber evidence="1">1.10.3.9</ecNumber>
    </recommendedName>
    <alternativeName>
        <fullName evidence="1">Photosystem Q(A) protein</fullName>
    </alternativeName>
</protein>
<reference key="1">
    <citation type="journal article" date="2008" name="Curr. Biol.">
        <title>Chromatophore genome sequence of Paulinella sheds light on acquisition of photosynthesis by eukaryotes.</title>
        <authorList>
            <person name="Nowack E.C.M."/>
            <person name="Melkonian M."/>
            <person name="Gloeckner G."/>
        </authorList>
    </citation>
    <scope>NUCLEOTIDE SEQUENCE [LARGE SCALE GENOMIC DNA]</scope>
</reference>
<evidence type="ECO:0000255" key="1">
    <source>
        <dbReference type="HAMAP-Rule" id="MF_01383"/>
    </source>
</evidence>
<sequence length="352" mass="39293">MTIAVGRAPAARGWFDILDDWLKRDRFVFVGWSGLLLFPTAYLALGGWLTGTTFVTSWYTHGIASSYLEGCNFLTAAVSTPADAMGHSLLLLWGPEAQGDFVRWCQLGGLWAFVALHGAFALIGFMLRQFEIARLVGIRPYNAIAFSGPIAVFVSVFLIYPLGQSSWFFAPSFGVAAIFRFLLFLQGFHNWTLNPFHMMGVAGILGGALLCAIHGATVENTLFEDGEQANTFKAFEPTQEEETYSMVTANRFWSQIFGIAFSNKRWLHFFMLFVPVMGLWTSSIGIIGLALNLRAYDFVSQEIRAAEDPEFETFYTKNILLNEGLRAWMAPADQPHENFVFPEEVLPRGNAL</sequence>
<proteinExistence type="inferred from homology"/>
<keyword id="KW-0148">Chlorophyll</keyword>
<keyword id="KW-0157">Chromophore</keyword>
<keyword id="KW-0249">Electron transport</keyword>
<keyword id="KW-0408">Iron</keyword>
<keyword id="KW-0460">Magnesium</keyword>
<keyword id="KW-0472">Membrane</keyword>
<keyword id="KW-0479">Metal-binding</keyword>
<keyword id="KW-0994">Organellar chromatophore</keyword>
<keyword id="KW-0560">Oxidoreductase</keyword>
<keyword id="KW-0602">Photosynthesis</keyword>
<keyword id="KW-0604">Photosystem II</keyword>
<keyword id="KW-0934">Plastid</keyword>
<keyword id="KW-0793">Thylakoid</keyword>
<keyword id="KW-0812">Transmembrane</keyword>
<keyword id="KW-1133">Transmembrane helix</keyword>
<keyword id="KW-0813">Transport</keyword>